<sequence>MTFEQLIPLIIMAFALGMDAFSVSLGMGMMALKIRQILYIGVTIGIFHIIMPFIGMVLGRFLSEQYGDIAHFAGAILLIGLGFYIVYSSILENEETRTAPIGISLFVFAFGVSIDSFSVGLSLGIYGAQTIITILLFGFVSMLLAWIGLLIGRHAKGMLGTYGEIVGGIILVGFGLYLLFPI</sequence>
<name>MNTP_BACAC</name>
<organism>
    <name type="scientific">Bacillus anthracis (strain CDC 684 / NRRL 3495)</name>
    <dbReference type="NCBI Taxonomy" id="568206"/>
    <lineage>
        <taxon>Bacteria</taxon>
        <taxon>Bacillati</taxon>
        <taxon>Bacillota</taxon>
        <taxon>Bacilli</taxon>
        <taxon>Bacillales</taxon>
        <taxon>Bacillaceae</taxon>
        <taxon>Bacillus</taxon>
        <taxon>Bacillus cereus group</taxon>
    </lineage>
</organism>
<reference key="1">
    <citation type="submission" date="2008-10" db="EMBL/GenBank/DDBJ databases">
        <title>Genome sequence of Bacillus anthracis str. CDC 684.</title>
        <authorList>
            <person name="Dodson R.J."/>
            <person name="Munk A.C."/>
            <person name="Brettin T."/>
            <person name="Bruce D."/>
            <person name="Detter C."/>
            <person name="Tapia R."/>
            <person name="Han C."/>
            <person name="Sutton G."/>
            <person name="Sims D."/>
        </authorList>
    </citation>
    <scope>NUCLEOTIDE SEQUENCE [LARGE SCALE GENOMIC DNA]</scope>
    <source>
        <strain>CDC 684 / NRRL 3495</strain>
    </source>
</reference>
<dbReference type="EMBL" id="CP001215">
    <property type="protein sequence ID" value="ACP16528.1"/>
    <property type="molecule type" value="Genomic_DNA"/>
</dbReference>
<dbReference type="RefSeq" id="WP_000142467.1">
    <property type="nucleotide sequence ID" value="NC_012581.1"/>
</dbReference>
<dbReference type="KEGG" id="bah:BAMEG_5613"/>
<dbReference type="HOGENOM" id="CLU_096410_1_0_9"/>
<dbReference type="GO" id="GO:0005886">
    <property type="term" value="C:plasma membrane"/>
    <property type="evidence" value="ECO:0007669"/>
    <property type="project" value="UniProtKB-SubCell"/>
</dbReference>
<dbReference type="GO" id="GO:0005384">
    <property type="term" value="F:manganese ion transmembrane transporter activity"/>
    <property type="evidence" value="ECO:0007669"/>
    <property type="project" value="UniProtKB-UniRule"/>
</dbReference>
<dbReference type="HAMAP" id="MF_01521">
    <property type="entry name" value="MntP_pump"/>
    <property type="match status" value="1"/>
</dbReference>
<dbReference type="InterPro" id="IPR003810">
    <property type="entry name" value="Mntp/YtaF"/>
</dbReference>
<dbReference type="InterPro" id="IPR022929">
    <property type="entry name" value="Put_MntP"/>
</dbReference>
<dbReference type="PANTHER" id="PTHR35529">
    <property type="entry name" value="MANGANESE EFFLUX PUMP MNTP-RELATED"/>
    <property type="match status" value="1"/>
</dbReference>
<dbReference type="PANTHER" id="PTHR35529:SF1">
    <property type="entry name" value="MANGANESE EFFLUX PUMP MNTP-RELATED"/>
    <property type="match status" value="1"/>
</dbReference>
<dbReference type="Pfam" id="PF02659">
    <property type="entry name" value="Mntp"/>
    <property type="match status" value="1"/>
</dbReference>
<feature type="chain" id="PRO_1000185101" description="Putative manganese efflux pump MntP">
    <location>
        <begin position="1"/>
        <end position="182"/>
    </location>
</feature>
<feature type="transmembrane region" description="Helical" evidence="1">
    <location>
        <begin position="6"/>
        <end position="26"/>
    </location>
</feature>
<feature type="transmembrane region" description="Helical" evidence="1">
    <location>
        <begin position="37"/>
        <end position="57"/>
    </location>
</feature>
<feature type="transmembrane region" description="Helical" evidence="1">
    <location>
        <begin position="71"/>
        <end position="91"/>
    </location>
</feature>
<feature type="transmembrane region" description="Helical" evidence="1">
    <location>
        <begin position="101"/>
        <end position="121"/>
    </location>
</feature>
<feature type="transmembrane region" description="Helical" evidence="1">
    <location>
        <begin position="131"/>
        <end position="151"/>
    </location>
</feature>
<feature type="transmembrane region" description="Helical" evidence="1">
    <location>
        <begin position="162"/>
        <end position="182"/>
    </location>
</feature>
<evidence type="ECO:0000255" key="1">
    <source>
        <dbReference type="HAMAP-Rule" id="MF_01521"/>
    </source>
</evidence>
<gene>
    <name evidence="1" type="primary">mntP</name>
    <name type="ordered locus">BAMEG_5613</name>
</gene>
<keyword id="KW-1003">Cell membrane</keyword>
<keyword id="KW-0406">Ion transport</keyword>
<keyword id="KW-0464">Manganese</keyword>
<keyword id="KW-0472">Membrane</keyword>
<keyword id="KW-0812">Transmembrane</keyword>
<keyword id="KW-1133">Transmembrane helix</keyword>
<keyword id="KW-0813">Transport</keyword>
<accession>C3LFJ8</accession>
<protein>
    <recommendedName>
        <fullName evidence="1">Putative manganese efflux pump MntP</fullName>
    </recommendedName>
</protein>
<proteinExistence type="inferred from homology"/>
<comment type="function">
    <text evidence="1">Probably functions as a manganese efflux pump.</text>
</comment>
<comment type="subcellular location">
    <subcellularLocation>
        <location evidence="1">Cell membrane</location>
        <topology evidence="1">Multi-pass membrane protein</topology>
    </subcellularLocation>
</comment>
<comment type="similarity">
    <text evidence="1">Belongs to the MntP (TC 9.B.29) family.</text>
</comment>